<keyword id="KW-0687">Ribonucleoprotein</keyword>
<keyword id="KW-0689">Ribosomal protein</keyword>
<keyword id="KW-0694">RNA-binding</keyword>
<keyword id="KW-0699">rRNA-binding</keyword>
<name>RL31_RHOP5</name>
<comment type="function">
    <text evidence="1">Binds the 23S rRNA.</text>
</comment>
<comment type="subunit">
    <text evidence="1">Part of the 50S ribosomal subunit.</text>
</comment>
<comment type="similarity">
    <text evidence="1">Belongs to the bacterial ribosomal protein bL31 family. Type A subfamily.</text>
</comment>
<sequence length="73" mass="8328">MKAEIHPDYHNITVVMTDGTEYVTRSTWGKEGDKMNLDIDPKSHPAWTGGTQQMLDRGGRVSRFQKKFSGFLK</sequence>
<evidence type="ECO:0000255" key="1">
    <source>
        <dbReference type="HAMAP-Rule" id="MF_00501"/>
    </source>
</evidence>
<evidence type="ECO:0000256" key="2">
    <source>
        <dbReference type="SAM" id="MobiDB-lite"/>
    </source>
</evidence>
<evidence type="ECO:0000305" key="3"/>
<organism>
    <name type="scientific">Rhodopseudomonas palustris (strain BisA53)</name>
    <dbReference type="NCBI Taxonomy" id="316055"/>
    <lineage>
        <taxon>Bacteria</taxon>
        <taxon>Pseudomonadati</taxon>
        <taxon>Pseudomonadota</taxon>
        <taxon>Alphaproteobacteria</taxon>
        <taxon>Hyphomicrobiales</taxon>
        <taxon>Nitrobacteraceae</taxon>
        <taxon>Rhodopseudomonas</taxon>
    </lineage>
</organism>
<proteinExistence type="inferred from homology"/>
<feature type="chain" id="PRO_1000126708" description="Large ribosomal subunit protein bL31">
    <location>
        <begin position="1"/>
        <end position="73"/>
    </location>
</feature>
<feature type="region of interest" description="Disordered" evidence="2">
    <location>
        <begin position="34"/>
        <end position="54"/>
    </location>
</feature>
<feature type="compositionally biased region" description="Basic and acidic residues" evidence="2">
    <location>
        <begin position="34"/>
        <end position="43"/>
    </location>
</feature>
<gene>
    <name evidence="1" type="primary">rpmE</name>
    <name type="ordered locus">RPE_0665</name>
</gene>
<accession>Q07TW1</accession>
<dbReference type="EMBL" id="CP000463">
    <property type="protein sequence ID" value="ABJ04623.1"/>
    <property type="molecule type" value="Genomic_DNA"/>
</dbReference>
<dbReference type="SMR" id="Q07TW1"/>
<dbReference type="STRING" id="316055.RPE_0665"/>
<dbReference type="KEGG" id="rpe:RPE_0665"/>
<dbReference type="eggNOG" id="COG0254">
    <property type="taxonomic scope" value="Bacteria"/>
</dbReference>
<dbReference type="HOGENOM" id="CLU_114306_3_2_5"/>
<dbReference type="OrthoDB" id="9803251at2"/>
<dbReference type="GO" id="GO:1990904">
    <property type="term" value="C:ribonucleoprotein complex"/>
    <property type="evidence" value="ECO:0007669"/>
    <property type="project" value="UniProtKB-KW"/>
</dbReference>
<dbReference type="GO" id="GO:0005840">
    <property type="term" value="C:ribosome"/>
    <property type="evidence" value="ECO:0007669"/>
    <property type="project" value="UniProtKB-KW"/>
</dbReference>
<dbReference type="GO" id="GO:0019843">
    <property type="term" value="F:rRNA binding"/>
    <property type="evidence" value="ECO:0007669"/>
    <property type="project" value="UniProtKB-KW"/>
</dbReference>
<dbReference type="GO" id="GO:0003735">
    <property type="term" value="F:structural constituent of ribosome"/>
    <property type="evidence" value="ECO:0007669"/>
    <property type="project" value="InterPro"/>
</dbReference>
<dbReference type="GO" id="GO:0006412">
    <property type="term" value="P:translation"/>
    <property type="evidence" value="ECO:0007669"/>
    <property type="project" value="UniProtKB-UniRule"/>
</dbReference>
<dbReference type="Gene3D" id="4.10.830.30">
    <property type="entry name" value="Ribosomal protein L31"/>
    <property type="match status" value="1"/>
</dbReference>
<dbReference type="HAMAP" id="MF_00501">
    <property type="entry name" value="Ribosomal_bL31_1"/>
    <property type="match status" value="1"/>
</dbReference>
<dbReference type="InterPro" id="IPR034704">
    <property type="entry name" value="Ribosomal_bL28/bL31-like_sf"/>
</dbReference>
<dbReference type="InterPro" id="IPR002150">
    <property type="entry name" value="Ribosomal_bL31"/>
</dbReference>
<dbReference type="InterPro" id="IPR027491">
    <property type="entry name" value="Ribosomal_bL31_A"/>
</dbReference>
<dbReference type="InterPro" id="IPR042105">
    <property type="entry name" value="Ribosomal_bL31_sf"/>
</dbReference>
<dbReference type="NCBIfam" id="TIGR00105">
    <property type="entry name" value="L31"/>
    <property type="match status" value="1"/>
</dbReference>
<dbReference type="NCBIfam" id="NF001809">
    <property type="entry name" value="PRK00528.1"/>
    <property type="match status" value="1"/>
</dbReference>
<dbReference type="PANTHER" id="PTHR33280">
    <property type="entry name" value="50S RIBOSOMAL PROTEIN L31, CHLOROPLASTIC"/>
    <property type="match status" value="1"/>
</dbReference>
<dbReference type="PANTHER" id="PTHR33280:SF6">
    <property type="entry name" value="LARGE RIBOSOMAL SUBUNIT PROTEIN BL31A"/>
    <property type="match status" value="1"/>
</dbReference>
<dbReference type="Pfam" id="PF01197">
    <property type="entry name" value="Ribosomal_L31"/>
    <property type="match status" value="1"/>
</dbReference>
<dbReference type="PRINTS" id="PR01249">
    <property type="entry name" value="RIBOSOMALL31"/>
</dbReference>
<dbReference type="SUPFAM" id="SSF143800">
    <property type="entry name" value="L28p-like"/>
    <property type="match status" value="1"/>
</dbReference>
<dbReference type="PROSITE" id="PS01143">
    <property type="entry name" value="RIBOSOMAL_L31"/>
    <property type="match status" value="1"/>
</dbReference>
<reference key="1">
    <citation type="submission" date="2006-09" db="EMBL/GenBank/DDBJ databases">
        <title>Complete sequence of Rhodopseudomonas palustris BisA53.</title>
        <authorList>
            <consortium name="US DOE Joint Genome Institute"/>
            <person name="Copeland A."/>
            <person name="Lucas S."/>
            <person name="Lapidus A."/>
            <person name="Barry K."/>
            <person name="Detter J.C."/>
            <person name="Glavina del Rio T."/>
            <person name="Hammon N."/>
            <person name="Israni S."/>
            <person name="Dalin E."/>
            <person name="Tice H."/>
            <person name="Pitluck S."/>
            <person name="Chain P."/>
            <person name="Malfatti S."/>
            <person name="Shin M."/>
            <person name="Vergez L."/>
            <person name="Schmutz J."/>
            <person name="Larimer F."/>
            <person name="Land M."/>
            <person name="Hauser L."/>
            <person name="Pelletier D.A."/>
            <person name="Kyrpides N."/>
            <person name="Kim E."/>
            <person name="Harwood C.S."/>
            <person name="Oda Y."/>
            <person name="Richardson P."/>
        </authorList>
    </citation>
    <scope>NUCLEOTIDE SEQUENCE [LARGE SCALE GENOMIC DNA]</scope>
    <source>
        <strain>BisA53</strain>
    </source>
</reference>
<protein>
    <recommendedName>
        <fullName evidence="1">Large ribosomal subunit protein bL31</fullName>
    </recommendedName>
    <alternativeName>
        <fullName evidence="3">50S ribosomal protein L31</fullName>
    </alternativeName>
</protein>